<sequence>MSWLEKILEKSNIVSSRKASIPEGVWTKCTSCEQVLYHAELERNLEVCPKCNHHMRMKARRRLETFLDEGNRVELGGELEPQDKLKFKDSKRYKERIAAAQKSSGEKDALVAMKGELLGMPIVACAFEFSFMGGSMGSVVGARFVRAVEAAMENNCALVCFSASGGARMQEALMSLMQMAKTSAALERLSAKGLPFISVMTDPTMGGVSASLAMLGDINIGEPKALIGFAGRRVIEQTVREDLPEGFQRSEFLLEHGAIDMIVDRREMRQRVGGLIAKLTNHKSPLVVSVNDSPNEAAYSVPEANEKG</sequence>
<reference key="1">
    <citation type="journal article" date="2003" name="Genome Res.">
        <title>Comparative genome analysis of Vibrio vulnificus, a marine pathogen.</title>
        <authorList>
            <person name="Chen C.-Y."/>
            <person name="Wu K.-M."/>
            <person name="Chang Y.-C."/>
            <person name="Chang C.-H."/>
            <person name="Tsai H.-C."/>
            <person name="Liao T.-L."/>
            <person name="Liu Y.-M."/>
            <person name="Chen H.-J."/>
            <person name="Shen A.B.-T."/>
            <person name="Li J.-C."/>
            <person name="Su T.-L."/>
            <person name="Shao C.-P."/>
            <person name="Lee C.-T."/>
            <person name="Hor L.-I."/>
            <person name="Tsai S.-F."/>
        </authorList>
    </citation>
    <scope>NUCLEOTIDE SEQUENCE [LARGE SCALE GENOMIC DNA]</scope>
    <source>
        <strain>YJ016</strain>
    </source>
</reference>
<organism>
    <name type="scientific">Vibrio vulnificus (strain YJ016)</name>
    <dbReference type="NCBI Taxonomy" id="196600"/>
    <lineage>
        <taxon>Bacteria</taxon>
        <taxon>Pseudomonadati</taxon>
        <taxon>Pseudomonadota</taxon>
        <taxon>Gammaproteobacteria</taxon>
        <taxon>Vibrionales</taxon>
        <taxon>Vibrionaceae</taxon>
        <taxon>Vibrio</taxon>
    </lineage>
</organism>
<keyword id="KW-0067">ATP-binding</keyword>
<keyword id="KW-0963">Cytoplasm</keyword>
<keyword id="KW-0275">Fatty acid biosynthesis</keyword>
<keyword id="KW-0276">Fatty acid metabolism</keyword>
<keyword id="KW-0444">Lipid biosynthesis</keyword>
<keyword id="KW-0443">Lipid metabolism</keyword>
<keyword id="KW-0479">Metal-binding</keyword>
<keyword id="KW-0547">Nucleotide-binding</keyword>
<keyword id="KW-0808">Transferase</keyword>
<keyword id="KW-0862">Zinc</keyword>
<keyword id="KW-0863">Zinc-finger</keyword>
<evidence type="ECO:0000255" key="1">
    <source>
        <dbReference type="HAMAP-Rule" id="MF_01395"/>
    </source>
</evidence>
<evidence type="ECO:0000255" key="2">
    <source>
        <dbReference type="PROSITE-ProRule" id="PRU01136"/>
    </source>
</evidence>
<proteinExistence type="inferred from homology"/>
<gene>
    <name evidence="1" type="primary">accD</name>
    <name type="ordered locus">VV2424</name>
</gene>
<feature type="chain" id="PRO_0000359093" description="Acetyl-coenzyme A carboxylase carboxyl transferase subunit beta">
    <location>
        <begin position="1"/>
        <end position="308"/>
    </location>
</feature>
<feature type="domain" description="CoA carboxyltransferase N-terminal" evidence="2">
    <location>
        <begin position="25"/>
        <end position="294"/>
    </location>
</feature>
<feature type="zinc finger region" description="C4-type" evidence="1">
    <location>
        <begin position="29"/>
        <end position="51"/>
    </location>
</feature>
<feature type="binding site" evidence="1">
    <location>
        <position position="29"/>
    </location>
    <ligand>
        <name>Zn(2+)</name>
        <dbReference type="ChEBI" id="CHEBI:29105"/>
    </ligand>
</feature>
<feature type="binding site" evidence="1">
    <location>
        <position position="32"/>
    </location>
    <ligand>
        <name>Zn(2+)</name>
        <dbReference type="ChEBI" id="CHEBI:29105"/>
    </ligand>
</feature>
<feature type="binding site" evidence="1">
    <location>
        <position position="48"/>
    </location>
    <ligand>
        <name>Zn(2+)</name>
        <dbReference type="ChEBI" id="CHEBI:29105"/>
    </ligand>
</feature>
<feature type="binding site" evidence="1">
    <location>
        <position position="51"/>
    </location>
    <ligand>
        <name>Zn(2+)</name>
        <dbReference type="ChEBI" id="CHEBI:29105"/>
    </ligand>
</feature>
<comment type="function">
    <text evidence="1">Component of the acetyl coenzyme A carboxylase (ACC) complex. Biotin carboxylase (BC) catalyzes the carboxylation of biotin on its carrier protein (BCCP) and then the CO(2) group is transferred by the transcarboxylase to acetyl-CoA to form malonyl-CoA.</text>
</comment>
<comment type="catalytic activity">
    <reaction evidence="1">
        <text>N(6)-carboxybiotinyl-L-lysyl-[protein] + acetyl-CoA = N(6)-biotinyl-L-lysyl-[protein] + malonyl-CoA</text>
        <dbReference type="Rhea" id="RHEA:54728"/>
        <dbReference type="Rhea" id="RHEA-COMP:10505"/>
        <dbReference type="Rhea" id="RHEA-COMP:10506"/>
        <dbReference type="ChEBI" id="CHEBI:57288"/>
        <dbReference type="ChEBI" id="CHEBI:57384"/>
        <dbReference type="ChEBI" id="CHEBI:83144"/>
        <dbReference type="ChEBI" id="CHEBI:83145"/>
        <dbReference type="EC" id="2.1.3.15"/>
    </reaction>
</comment>
<comment type="cofactor">
    <cofactor evidence="1">
        <name>Zn(2+)</name>
        <dbReference type="ChEBI" id="CHEBI:29105"/>
    </cofactor>
    <text evidence="1">Binds 1 zinc ion per subunit.</text>
</comment>
<comment type="pathway">
    <text evidence="1">Lipid metabolism; malonyl-CoA biosynthesis; malonyl-CoA from acetyl-CoA: step 1/1.</text>
</comment>
<comment type="subunit">
    <text evidence="1">Acetyl-CoA carboxylase is a heterohexamer composed of biotin carboxyl carrier protein (AccB), biotin carboxylase (AccC) and two subunits each of ACCase subunit alpha (AccA) and ACCase subunit beta (AccD).</text>
</comment>
<comment type="subcellular location">
    <subcellularLocation>
        <location evidence="1">Cytoplasm</location>
    </subcellularLocation>
</comment>
<comment type="similarity">
    <text evidence="1">Belongs to the AccD/PCCB family.</text>
</comment>
<dbReference type="EC" id="2.1.3.15" evidence="1"/>
<dbReference type="EMBL" id="BA000037">
    <property type="protein sequence ID" value="BAC95187.1"/>
    <property type="molecule type" value="Genomic_DNA"/>
</dbReference>
<dbReference type="RefSeq" id="WP_011079890.1">
    <property type="nucleotide sequence ID" value="NC_005139.1"/>
</dbReference>
<dbReference type="SMR" id="Q7MIU0"/>
<dbReference type="STRING" id="672.VV93_v1c21270"/>
<dbReference type="GeneID" id="93896213"/>
<dbReference type="KEGG" id="vvy:VV2424"/>
<dbReference type="eggNOG" id="COG0777">
    <property type="taxonomic scope" value="Bacteria"/>
</dbReference>
<dbReference type="HOGENOM" id="CLU_015486_1_0_6"/>
<dbReference type="UniPathway" id="UPA00655">
    <property type="reaction ID" value="UER00711"/>
</dbReference>
<dbReference type="Proteomes" id="UP000002675">
    <property type="component" value="Chromosome I"/>
</dbReference>
<dbReference type="GO" id="GO:0009329">
    <property type="term" value="C:acetate CoA-transferase complex"/>
    <property type="evidence" value="ECO:0007669"/>
    <property type="project" value="TreeGrafter"/>
</dbReference>
<dbReference type="GO" id="GO:0003989">
    <property type="term" value="F:acetyl-CoA carboxylase activity"/>
    <property type="evidence" value="ECO:0007669"/>
    <property type="project" value="InterPro"/>
</dbReference>
<dbReference type="GO" id="GO:0005524">
    <property type="term" value="F:ATP binding"/>
    <property type="evidence" value="ECO:0007669"/>
    <property type="project" value="UniProtKB-KW"/>
</dbReference>
<dbReference type="GO" id="GO:0016743">
    <property type="term" value="F:carboxyl- or carbamoyltransferase activity"/>
    <property type="evidence" value="ECO:0007669"/>
    <property type="project" value="UniProtKB-UniRule"/>
</dbReference>
<dbReference type="GO" id="GO:0008270">
    <property type="term" value="F:zinc ion binding"/>
    <property type="evidence" value="ECO:0007669"/>
    <property type="project" value="UniProtKB-UniRule"/>
</dbReference>
<dbReference type="GO" id="GO:0006633">
    <property type="term" value="P:fatty acid biosynthetic process"/>
    <property type="evidence" value="ECO:0007669"/>
    <property type="project" value="UniProtKB-KW"/>
</dbReference>
<dbReference type="GO" id="GO:2001295">
    <property type="term" value="P:malonyl-CoA biosynthetic process"/>
    <property type="evidence" value="ECO:0007669"/>
    <property type="project" value="UniProtKB-UniRule"/>
</dbReference>
<dbReference type="FunFam" id="3.90.226.10:FF:000013">
    <property type="entry name" value="Acetyl-coenzyme A carboxylase carboxyl transferase subunit beta"/>
    <property type="match status" value="1"/>
</dbReference>
<dbReference type="Gene3D" id="3.90.226.10">
    <property type="entry name" value="2-enoyl-CoA Hydratase, Chain A, domain 1"/>
    <property type="match status" value="1"/>
</dbReference>
<dbReference type="HAMAP" id="MF_01395">
    <property type="entry name" value="AcetylCoA_CT_beta"/>
    <property type="match status" value="1"/>
</dbReference>
<dbReference type="InterPro" id="IPR034733">
    <property type="entry name" value="AcCoA_carboxyl_beta"/>
</dbReference>
<dbReference type="InterPro" id="IPR000438">
    <property type="entry name" value="Acetyl_CoA_COase_Trfase_b_su"/>
</dbReference>
<dbReference type="InterPro" id="IPR029045">
    <property type="entry name" value="ClpP/crotonase-like_dom_sf"/>
</dbReference>
<dbReference type="InterPro" id="IPR011762">
    <property type="entry name" value="COA_CT_N"/>
</dbReference>
<dbReference type="InterPro" id="IPR041010">
    <property type="entry name" value="Znf-ACC"/>
</dbReference>
<dbReference type="NCBIfam" id="TIGR00515">
    <property type="entry name" value="accD"/>
    <property type="match status" value="1"/>
</dbReference>
<dbReference type="PANTHER" id="PTHR42995">
    <property type="entry name" value="ACETYL-COENZYME A CARBOXYLASE CARBOXYL TRANSFERASE SUBUNIT BETA, CHLOROPLASTIC"/>
    <property type="match status" value="1"/>
</dbReference>
<dbReference type="PANTHER" id="PTHR42995:SF5">
    <property type="entry name" value="ACETYL-COENZYME A CARBOXYLASE CARBOXYL TRANSFERASE SUBUNIT BETA, CHLOROPLASTIC"/>
    <property type="match status" value="1"/>
</dbReference>
<dbReference type="Pfam" id="PF01039">
    <property type="entry name" value="Carboxyl_trans"/>
    <property type="match status" value="1"/>
</dbReference>
<dbReference type="Pfam" id="PF17848">
    <property type="entry name" value="Zn_ribbon_ACC"/>
    <property type="match status" value="1"/>
</dbReference>
<dbReference type="PRINTS" id="PR01070">
    <property type="entry name" value="ACCCTRFRASEB"/>
</dbReference>
<dbReference type="SUPFAM" id="SSF52096">
    <property type="entry name" value="ClpP/crotonase"/>
    <property type="match status" value="1"/>
</dbReference>
<dbReference type="PROSITE" id="PS50980">
    <property type="entry name" value="COA_CT_NTER"/>
    <property type="match status" value="1"/>
</dbReference>
<accession>Q7MIU0</accession>
<protein>
    <recommendedName>
        <fullName evidence="1">Acetyl-coenzyme A carboxylase carboxyl transferase subunit beta</fullName>
        <shortName evidence="1">ACCase subunit beta</shortName>
        <shortName evidence="1">Acetyl-CoA carboxylase carboxyltransferase subunit beta</shortName>
        <ecNumber evidence="1">2.1.3.15</ecNumber>
    </recommendedName>
</protein>
<name>ACCD_VIBVY</name>